<reference key="1">
    <citation type="journal article" date="2008" name="Proc. Natl. Acad. Sci. U.S.A.">
        <title>Cloning and characterization of SARI (suppressor of AP-1, regulated by IFN).</title>
        <authorList>
            <person name="Su Z.Z."/>
            <person name="Lee S.G."/>
            <person name="Emdad L."/>
            <person name="Lebdeva I.V."/>
            <person name="Gupta P."/>
            <person name="Valerie K."/>
            <person name="Sarkar D."/>
            <person name="Fisher P.B."/>
        </authorList>
    </citation>
    <scope>NUCLEOTIDE SEQUENCE [MRNA] (ISOFORM 1)</scope>
    <scope>INDUCTION</scope>
</reference>
<reference key="2">
    <citation type="journal article" date="2004" name="Nat. Genet.">
        <title>Complete sequencing and characterization of 21,243 full-length human cDNAs.</title>
        <authorList>
            <person name="Ota T."/>
            <person name="Suzuki Y."/>
            <person name="Nishikawa T."/>
            <person name="Otsuki T."/>
            <person name="Sugiyama T."/>
            <person name="Irie R."/>
            <person name="Wakamatsu A."/>
            <person name="Hayashi K."/>
            <person name="Sato H."/>
            <person name="Nagai K."/>
            <person name="Kimura K."/>
            <person name="Makita H."/>
            <person name="Sekine M."/>
            <person name="Obayashi M."/>
            <person name="Nishi T."/>
            <person name="Shibahara T."/>
            <person name="Tanaka T."/>
            <person name="Ishii S."/>
            <person name="Yamamoto J."/>
            <person name="Saito K."/>
            <person name="Kawai Y."/>
            <person name="Isono Y."/>
            <person name="Nakamura Y."/>
            <person name="Nagahari K."/>
            <person name="Murakami K."/>
            <person name="Yasuda T."/>
            <person name="Iwayanagi T."/>
            <person name="Wagatsuma M."/>
            <person name="Shiratori A."/>
            <person name="Sudo H."/>
            <person name="Hosoiri T."/>
            <person name="Kaku Y."/>
            <person name="Kodaira H."/>
            <person name="Kondo H."/>
            <person name="Sugawara M."/>
            <person name="Takahashi M."/>
            <person name="Kanda K."/>
            <person name="Yokoi T."/>
            <person name="Furuya T."/>
            <person name="Kikkawa E."/>
            <person name="Omura Y."/>
            <person name="Abe K."/>
            <person name="Kamihara K."/>
            <person name="Katsuta N."/>
            <person name="Sato K."/>
            <person name="Tanikawa M."/>
            <person name="Yamazaki M."/>
            <person name="Ninomiya K."/>
            <person name="Ishibashi T."/>
            <person name="Yamashita H."/>
            <person name="Murakawa K."/>
            <person name="Fujimori K."/>
            <person name="Tanai H."/>
            <person name="Kimata M."/>
            <person name="Watanabe M."/>
            <person name="Hiraoka S."/>
            <person name="Chiba Y."/>
            <person name="Ishida S."/>
            <person name="Ono Y."/>
            <person name="Takiguchi S."/>
            <person name="Watanabe S."/>
            <person name="Yosida M."/>
            <person name="Hotuta T."/>
            <person name="Kusano J."/>
            <person name="Kanehori K."/>
            <person name="Takahashi-Fujii A."/>
            <person name="Hara H."/>
            <person name="Tanase T.-O."/>
            <person name="Nomura Y."/>
            <person name="Togiya S."/>
            <person name="Komai F."/>
            <person name="Hara R."/>
            <person name="Takeuchi K."/>
            <person name="Arita M."/>
            <person name="Imose N."/>
            <person name="Musashino K."/>
            <person name="Yuuki H."/>
            <person name="Oshima A."/>
            <person name="Sasaki N."/>
            <person name="Aotsuka S."/>
            <person name="Yoshikawa Y."/>
            <person name="Matsunawa H."/>
            <person name="Ichihara T."/>
            <person name="Shiohata N."/>
            <person name="Sano S."/>
            <person name="Moriya S."/>
            <person name="Momiyama H."/>
            <person name="Satoh N."/>
            <person name="Takami S."/>
            <person name="Terashima Y."/>
            <person name="Suzuki O."/>
            <person name="Nakagawa S."/>
            <person name="Senoh A."/>
            <person name="Mizoguchi H."/>
            <person name="Goto Y."/>
            <person name="Shimizu F."/>
            <person name="Wakebe H."/>
            <person name="Hishigaki H."/>
            <person name="Watanabe T."/>
            <person name="Sugiyama A."/>
            <person name="Takemoto M."/>
            <person name="Kawakami B."/>
            <person name="Yamazaki M."/>
            <person name="Watanabe K."/>
            <person name="Kumagai A."/>
            <person name="Itakura S."/>
            <person name="Fukuzumi Y."/>
            <person name="Fujimori Y."/>
            <person name="Komiyama M."/>
            <person name="Tashiro H."/>
            <person name="Tanigami A."/>
            <person name="Fujiwara T."/>
            <person name="Ono T."/>
            <person name="Yamada K."/>
            <person name="Fujii Y."/>
            <person name="Ozaki K."/>
            <person name="Hirao M."/>
            <person name="Ohmori Y."/>
            <person name="Kawabata A."/>
            <person name="Hikiji T."/>
            <person name="Kobatake N."/>
            <person name="Inagaki H."/>
            <person name="Ikema Y."/>
            <person name="Okamoto S."/>
            <person name="Okitani R."/>
            <person name="Kawakami T."/>
            <person name="Noguchi S."/>
            <person name="Itoh T."/>
            <person name="Shigeta K."/>
            <person name="Senba T."/>
            <person name="Matsumura K."/>
            <person name="Nakajima Y."/>
            <person name="Mizuno T."/>
            <person name="Morinaga M."/>
            <person name="Sasaki M."/>
            <person name="Togashi T."/>
            <person name="Oyama M."/>
            <person name="Hata H."/>
            <person name="Watanabe M."/>
            <person name="Komatsu T."/>
            <person name="Mizushima-Sugano J."/>
            <person name="Satoh T."/>
            <person name="Shirai Y."/>
            <person name="Takahashi Y."/>
            <person name="Nakagawa K."/>
            <person name="Okumura K."/>
            <person name="Nagase T."/>
            <person name="Nomura N."/>
            <person name="Kikuchi H."/>
            <person name="Masuho Y."/>
            <person name="Yamashita R."/>
            <person name="Nakai K."/>
            <person name="Yada T."/>
            <person name="Nakamura Y."/>
            <person name="Ohara O."/>
            <person name="Isogai T."/>
            <person name="Sugano S."/>
        </authorList>
    </citation>
    <scope>NUCLEOTIDE SEQUENCE [LARGE SCALE MRNA] (ISOFORMS 1 AND 2)</scope>
    <source>
        <tissue>Pericardium</tissue>
        <tissue>Placenta</tissue>
        <tissue>Small intestine</tissue>
    </source>
</reference>
<reference key="3">
    <citation type="submission" date="2005-07" db="EMBL/GenBank/DDBJ databases">
        <authorList>
            <person name="Mural R.J."/>
            <person name="Istrail S."/>
            <person name="Sutton G."/>
            <person name="Florea L."/>
            <person name="Halpern A.L."/>
            <person name="Mobarry C.M."/>
            <person name="Lippert R."/>
            <person name="Walenz B."/>
            <person name="Shatkay H."/>
            <person name="Dew I."/>
            <person name="Miller J.R."/>
            <person name="Flanigan M.J."/>
            <person name="Edwards N.J."/>
            <person name="Bolanos R."/>
            <person name="Fasulo D."/>
            <person name="Halldorsson B.V."/>
            <person name="Hannenhalli S."/>
            <person name="Turner R."/>
            <person name="Yooseph S."/>
            <person name="Lu F."/>
            <person name="Nusskern D.R."/>
            <person name="Shue B.C."/>
            <person name="Zheng X.H."/>
            <person name="Zhong F."/>
            <person name="Delcher A.L."/>
            <person name="Huson D.H."/>
            <person name="Kravitz S.A."/>
            <person name="Mouchard L."/>
            <person name="Reinert K."/>
            <person name="Remington K.A."/>
            <person name="Clark A.G."/>
            <person name="Waterman M.S."/>
            <person name="Eichler E.E."/>
            <person name="Adams M.D."/>
            <person name="Hunkapiller M.W."/>
            <person name="Myers E.W."/>
            <person name="Venter J.C."/>
        </authorList>
    </citation>
    <scope>NUCLEOTIDE SEQUENCE [LARGE SCALE GENOMIC DNA]</scope>
</reference>
<reference key="4">
    <citation type="journal article" date="2004" name="Genome Res.">
        <title>The status, quality, and expansion of the NIH full-length cDNA project: the Mammalian Gene Collection (MGC).</title>
        <authorList>
            <consortium name="The MGC Project Team"/>
        </authorList>
    </citation>
    <scope>NUCLEOTIDE SEQUENCE [LARGE SCALE MRNA] (ISOFORM 2)</scope>
    <source>
        <tissue>Lung</tissue>
    </source>
</reference>
<reference key="5">
    <citation type="journal article" date="2010" name="Oncogene">
        <title>Inhibition of AP-1 by SARI negatively regulates transformation progression mediated by CCN1.</title>
        <authorList>
            <person name="Dash R."/>
            <person name="Su Z.Z."/>
            <person name="Lee S.G."/>
            <person name="Azab B."/>
            <person name="Boukerche H."/>
            <person name="Sarkar D."/>
            <person name="Fisher P.B."/>
        </authorList>
    </citation>
    <scope>FUNCTION</scope>
</reference>
<reference key="6">
    <citation type="journal article" date="2011" name="Int. J. Cancer">
        <title>Decreased expression of BATF2 is associated with a poor prognosis in hepatocellular carcinoma.</title>
        <authorList>
            <person name="Ma H."/>
            <person name="Liang X."/>
            <person name="Chen Y."/>
            <person name="Pan K."/>
            <person name="Sun J."/>
            <person name="Wang H."/>
            <person name="Wang Q."/>
            <person name="Li Y."/>
            <person name="Zhao J."/>
            <person name="Li J."/>
            <person name="Chen M."/>
            <person name="Xia J."/>
        </authorList>
    </citation>
    <scope>INDUCTION</scope>
</reference>
<proteinExistence type="evidence at protein level"/>
<comment type="function">
    <text evidence="1 6">AP-1 family transcription factor that controls the differentiation of lineage-specific cells in the immune system. Following infection, participates in the differentiation of CD8(+) thymic conventional dendritic cells in the immune system. Acts via the formation of a heterodimer with JUN family proteins that recognizes and binds DNA sequence 5'-TGA[CG]TCA-3' and regulates expression of target genes (By similarity). Selectively suppresses CCN1 transcription and hence blocks the downstream cell proliferation signals produced by CCN1 and inhibits CCN1-induced anchorage-independent growth and invasion in several cancer types, such as breast cancer, malignant glioma and metastatic melanoma. Possibly acts by interfering with AP-1 binding to CCN1 promoter.</text>
</comment>
<comment type="subunit">
    <text evidence="1">Heterodimer; heterodimerizes with JUN family proteins.</text>
</comment>
<comment type="interaction">
    <interactant intactId="EBI-742695">
        <id>Q8N1L9</id>
    </interactant>
    <interactant intactId="EBI-1172054">
        <id>P49715</id>
        <label>CEBPA</label>
    </interactant>
    <organismsDiffer>false</organismsDiffer>
    <experiments>2</experiments>
</comment>
<comment type="interaction">
    <interactant intactId="EBI-742695">
        <id>Q8N1L9</id>
    </interactant>
    <interactant intactId="EBI-740209">
        <id>P53567</id>
        <label>CEBPG</label>
    </interactant>
    <organismsDiffer>false</organismsDiffer>
    <experiments>2</experiments>
</comment>
<comment type="interaction">
    <interactant intactId="EBI-742695">
        <id>Q8N1L9</id>
    </interactant>
    <interactant intactId="EBI-724310">
        <id>Q15038</id>
        <label>DAZAP2</label>
    </interactant>
    <organismsDiffer>false</organismsDiffer>
    <experiments>3</experiments>
</comment>
<comment type="interaction">
    <interactant intactId="EBI-742695">
        <id>Q8N1L9</id>
    </interactant>
    <interactant intactId="EBI-742651">
        <id>P35638</id>
        <label>DDIT3</label>
    </interactant>
    <organismsDiffer>false</organismsDiffer>
    <experiments>2</experiments>
</comment>
<comment type="interaction">
    <interactant intactId="EBI-742695">
        <id>Q8N1L9</id>
    </interactant>
    <interactant intactId="EBI-1759806">
        <id>O75593</id>
        <label>FOXH1</label>
    </interactant>
    <organismsDiffer>false</organismsDiffer>
    <experiments>3</experiments>
</comment>
<comment type="interaction">
    <interactant intactId="EBI-742695">
        <id>Q8N1L9</id>
    </interactant>
    <interactant intactId="EBI-12018822">
        <id>Q12951-2</id>
        <label>FOXI1</label>
    </interactant>
    <organismsDiffer>false</organismsDiffer>
    <experiments>3</experiments>
</comment>
<comment type="interaction">
    <interactant intactId="EBI-742695">
        <id>Q8N1L9</id>
    </interactant>
    <interactant intactId="EBI-347538">
        <id>Q9Y4H4</id>
        <label>GPSM3</label>
    </interactant>
    <organismsDiffer>false</organismsDiffer>
    <experiments>3</experiments>
</comment>
<comment type="interaction">
    <interactant intactId="EBI-742695">
        <id>Q8N1L9</id>
    </interactant>
    <interactant intactId="EBI-740785">
        <id>P49639</id>
        <label>HOXA1</label>
    </interactant>
    <organismsDiffer>false</organismsDiffer>
    <experiments>3</experiments>
</comment>
<comment type="interaction">
    <interactant intactId="EBI-742695">
        <id>Q8N1L9</id>
    </interactant>
    <interactant intactId="EBI-852823">
        <id>P05412</id>
        <label>JUN</label>
    </interactant>
    <organismsDiffer>false</organismsDiffer>
    <experiments>2</experiments>
</comment>
<comment type="interaction">
    <interactant intactId="EBI-742695">
        <id>Q8N1L9</id>
    </interactant>
    <interactant intactId="EBI-748062">
        <id>P17275</id>
        <label>JUNB</label>
    </interactant>
    <organismsDiffer>false</organismsDiffer>
    <experiments>5</experiments>
</comment>
<comment type="interaction">
    <interactant intactId="EBI-742695">
        <id>Q8N1L9</id>
    </interactant>
    <interactant intactId="EBI-1047093">
        <id>O76011</id>
        <label>KRT34</label>
    </interactant>
    <organismsDiffer>false</organismsDiffer>
    <experiments>3</experiments>
</comment>
<comment type="interaction">
    <interactant intactId="EBI-742695">
        <id>Q8N1L9</id>
    </interactant>
    <interactant intactId="EBI-721128">
        <id>Q9ULX9</id>
        <label>MAFF</label>
    </interactant>
    <organismsDiffer>false</organismsDiffer>
    <experiments>2</experiments>
</comment>
<comment type="interaction">
    <interactant intactId="EBI-742695">
        <id>Q8N1L9</id>
    </interactant>
    <interactant intactId="EBI-2340269">
        <id>Q13064</id>
        <label>MKRN3</label>
    </interactant>
    <organismsDiffer>false</organismsDiffer>
    <experiments>3</experiments>
</comment>
<comment type="interaction">
    <interactant intactId="EBI-742695">
        <id>Q8N1L9</id>
    </interactant>
    <interactant intactId="EBI-710402">
        <id>Q96I34</id>
        <label>PPP1R16A</label>
    </interactant>
    <organismsDiffer>false</organismsDiffer>
    <experiments>3</experiments>
</comment>
<comment type="interaction">
    <interactant intactId="EBI-742695">
        <id>Q8N1L9</id>
    </interactant>
    <interactant intactId="EBI-9027467">
        <id>O75360</id>
        <label>PROP1</label>
    </interactant>
    <organismsDiffer>false</organismsDiffer>
    <experiments>3</experiments>
</comment>
<comment type="interaction">
    <interactant intactId="EBI-742695">
        <id>Q8N1L9</id>
    </interactant>
    <interactant intactId="EBI-11959123">
        <id>Q99932-2</id>
        <label>SPAG8</label>
    </interactant>
    <organismsDiffer>false</organismsDiffer>
    <experiments>3</experiments>
</comment>
<comment type="interaction">
    <interactant intactId="EBI-742695">
        <id>Q8N1L9</id>
    </interactant>
    <interactant intactId="EBI-10191303">
        <id>O95231</id>
        <label>VENTX</label>
    </interactant>
    <organismsDiffer>false</organismsDiffer>
    <experiments>3</experiments>
</comment>
<comment type="interaction">
    <interactant intactId="EBI-742695">
        <id>Q8N1L9</id>
    </interactant>
    <interactant intactId="EBI-1051237">
        <id>Q9BYJ9</id>
        <label>YTHDF1</label>
    </interactant>
    <organismsDiffer>false</organismsDiffer>
    <experiments>3</experiments>
</comment>
<comment type="interaction">
    <interactant intactId="EBI-15746052">
        <id>Q8N1L9-1</id>
    </interactant>
    <interactant intactId="EBI-852823">
        <id>P05412</id>
        <label>JUN</label>
    </interactant>
    <organismsDiffer>false</organismsDiffer>
    <experiments>3</experiments>
</comment>
<comment type="subcellular location">
    <subcellularLocation>
        <location evidence="2">Nucleus</location>
    </subcellularLocation>
</comment>
<comment type="alternative products">
    <event type="alternative splicing"/>
    <isoform>
        <id>Q8N1L9-1</id>
        <name>1</name>
        <sequence type="displayed"/>
    </isoform>
    <isoform>
        <id>Q8N1L9-2</id>
        <name>2</name>
        <sequence type="described" ref="VSP_025752"/>
    </isoform>
</comment>
<comment type="induction">
    <text evidence="4 5">By type I interferon. Down-regulated in most hepatocellular carcinoma tumorous tissues (at protein level).</text>
</comment>
<comment type="similarity">
    <text evidence="9">Belongs to the bZIP family.</text>
</comment>
<keyword id="KW-0010">Activator</keyword>
<keyword id="KW-0025">Alternative splicing</keyword>
<keyword id="KW-0221">Differentiation</keyword>
<keyword id="KW-0238">DNA-binding</keyword>
<keyword id="KW-0539">Nucleus</keyword>
<keyword id="KW-1267">Proteomics identification</keyword>
<keyword id="KW-1185">Reference proteome</keyword>
<keyword id="KW-0804">Transcription</keyword>
<keyword id="KW-0805">Transcription regulation</keyword>
<organism>
    <name type="scientific">Homo sapiens</name>
    <name type="common">Human</name>
    <dbReference type="NCBI Taxonomy" id="9606"/>
    <lineage>
        <taxon>Eukaryota</taxon>
        <taxon>Metazoa</taxon>
        <taxon>Chordata</taxon>
        <taxon>Craniata</taxon>
        <taxon>Vertebrata</taxon>
        <taxon>Euteleostomi</taxon>
        <taxon>Mammalia</taxon>
        <taxon>Eutheria</taxon>
        <taxon>Euarchontoglires</taxon>
        <taxon>Primates</taxon>
        <taxon>Haplorrhini</taxon>
        <taxon>Catarrhini</taxon>
        <taxon>Hominidae</taxon>
        <taxon>Homo</taxon>
    </lineage>
</organism>
<evidence type="ECO:0000250" key="1"/>
<evidence type="ECO:0000255" key="2">
    <source>
        <dbReference type="PROSITE-ProRule" id="PRU00978"/>
    </source>
</evidence>
<evidence type="ECO:0000256" key="3">
    <source>
        <dbReference type="SAM" id="MobiDB-lite"/>
    </source>
</evidence>
<evidence type="ECO:0000269" key="4">
    <source>
    </source>
</evidence>
<evidence type="ECO:0000269" key="5">
    <source>
    </source>
</evidence>
<evidence type="ECO:0000269" key="6">
    <source>
    </source>
</evidence>
<evidence type="ECO:0000303" key="7">
    <source>
    </source>
</evidence>
<evidence type="ECO:0000303" key="8">
    <source>
    </source>
</evidence>
<evidence type="ECO:0000305" key="9"/>
<protein>
    <recommendedName>
        <fullName>Basic leucine zipper transcriptional factor ATF-like 2</fullName>
        <shortName>B-ATF-2</shortName>
    </recommendedName>
    <alternativeName>
        <fullName>Suppressor of AP-1 regulated by IFN</fullName>
        <shortName>SARI</shortName>
    </alternativeName>
</protein>
<name>BATF2_HUMAN</name>
<sequence length="274" mass="29398">MHLCGGNGLLTQTDPKEQQRQLKKQKNRAAAQRSRQKHTDKADALHQQHESLEKDNLALRKEIQSLQAELAWWSRTLHVHERLCPMDCASCSAPGLLGCWDQAEGLLGPGPQGQHGCREQLELFQTPGSCYPAQPLSPGPQPHDSPSLLQCPLPSLSLGPAVVAEPPVQLSPSPLLFASHTGSSLQGSSSKLSALQPSLTAQTAPPQPLELEHPTRGKLGSSPDNPSSALGLARLQSREHKPALSAATWQGLVVDPSPHPLLAFPLLSSAQVHF</sequence>
<accession>Q8N1L9</accession>
<accession>D9IC56</accession>
<accession>Q8NAF4</accession>
<accession>Q8NAL8</accession>
<accession>Q96EH4</accession>
<gene>
    <name type="primary">BATF2</name>
</gene>
<feature type="chain" id="PRO_0000288681" description="Basic leucine zipper transcriptional factor ATF-like 2">
    <location>
        <begin position="1"/>
        <end position="274"/>
    </location>
</feature>
<feature type="domain" description="bZIP" evidence="2">
    <location>
        <begin position="17"/>
        <end position="80"/>
    </location>
</feature>
<feature type="region of interest" description="Disordered" evidence="3">
    <location>
        <begin position="1"/>
        <end position="47"/>
    </location>
</feature>
<feature type="region of interest" description="Basic motif" evidence="2">
    <location>
        <begin position="20"/>
        <end position="41"/>
    </location>
</feature>
<feature type="region of interest" description="Leucine-zipper" evidence="2">
    <location>
        <begin position="45"/>
        <end position="66"/>
    </location>
</feature>
<feature type="region of interest" description="Disordered" evidence="3">
    <location>
        <begin position="128"/>
        <end position="151"/>
    </location>
</feature>
<feature type="region of interest" description="Disordered" evidence="3">
    <location>
        <begin position="187"/>
        <end position="229"/>
    </location>
</feature>
<feature type="compositionally biased region" description="Basic and acidic residues" evidence="3">
    <location>
        <begin position="37"/>
        <end position="47"/>
    </location>
</feature>
<feature type="compositionally biased region" description="Low complexity" evidence="3">
    <location>
        <begin position="187"/>
        <end position="196"/>
    </location>
</feature>
<feature type="splice variant" id="VSP_025752" description="In isoform 2." evidence="7 8">
    <location>
        <begin position="1"/>
        <end position="85"/>
    </location>
</feature>
<feature type="sequence variant" id="VAR_048443" description="In dbSNP:rs12419103.">
    <original>G</original>
    <variation>S</variation>
    <location>
        <position position="6"/>
    </location>
</feature>
<dbReference type="EMBL" id="HM134154">
    <property type="protein sequence ID" value="ADJ55304.1"/>
    <property type="molecule type" value="mRNA"/>
</dbReference>
<dbReference type="EMBL" id="AK092453">
    <property type="protein sequence ID" value="BAC03894.2"/>
    <property type="molecule type" value="mRNA"/>
</dbReference>
<dbReference type="EMBL" id="AK092761">
    <property type="protein sequence ID" value="BAC03968.2"/>
    <property type="molecule type" value="mRNA"/>
</dbReference>
<dbReference type="EMBL" id="AK096702">
    <property type="protein sequence ID" value="BAC04846.1"/>
    <property type="molecule type" value="mRNA"/>
</dbReference>
<dbReference type="EMBL" id="CH471076">
    <property type="protein sequence ID" value="EAW74330.1"/>
    <property type="molecule type" value="Genomic_DNA"/>
</dbReference>
<dbReference type="EMBL" id="BC012330">
    <property type="protein sequence ID" value="AAH12330.1"/>
    <property type="molecule type" value="mRNA"/>
</dbReference>
<dbReference type="CCDS" id="CCDS73317.1">
    <molecule id="Q8N1L9-2"/>
</dbReference>
<dbReference type="CCDS" id="CCDS8087.1">
    <molecule id="Q8N1L9-1"/>
</dbReference>
<dbReference type="RefSeq" id="NP_001287736.1">
    <property type="nucleotide sequence ID" value="NM_001300807.1"/>
</dbReference>
<dbReference type="RefSeq" id="NP_001287737.1">
    <molecule id="Q8N1L9-2"/>
    <property type="nucleotide sequence ID" value="NM_001300808.2"/>
</dbReference>
<dbReference type="RefSeq" id="NP_612465.3">
    <molecule id="Q8N1L9-1"/>
    <property type="nucleotide sequence ID" value="NM_138456.3"/>
</dbReference>
<dbReference type="SMR" id="Q8N1L9"/>
<dbReference type="BioGRID" id="125470">
    <property type="interactions" value="30"/>
</dbReference>
<dbReference type="ComplexPortal" id="CPX-6523">
    <property type="entry name" value="bZIP transcription factor complex, ATF4-BATF2"/>
</dbReference>
<dbReference type="ComplexPortal" id="CPX-7061">
    <property type="entry name" value="bZIP transcription factor complex, BATF2-JUNB"/>
</dbReference>
<dbReference type="ComplexPortal" id="CPX-7063">
    <property type="entry name" value="bZIP transcription factor complex, BATF2-JUN"/>
</dbReference>
<dbReference type="ComplexPortal" id="CPX-7064">
    <property type="entry name" value="bZIP transcription factor complex, BATF2-DDIT3"/>
</dbReference>
<dbReference type="ComplexPortal" id="CPX-7065">
    <property type="entry name" value="bZIP transcription factor complex, BATF2-CEBPA"/>
</dbReference>
<dbReference type="ComplexPortal" id="CPX-7066">
    <property type="entry name" value="bZIP transcription factor complex, BATF2-CEBPG"/>
</dbReference>
<dbReference type="ComplexPortal" id="CPX-7067">
    <property type="entry name" value="bZIP transcription factor complex, BATF2-CEBPE"/>
</dbReference>
<dbReference type="ComplexPortal" id="CPX-7068">
    <property type="entry name" value="bZIP transcription factor complex, BATF2-DBP"/>
</dbReference>
<dbReference type="ComplexPortal" id="CPX-7081">
    <property type="entry name" value="bZIP transcription factor complex, BATF2-HLF"/>
</dbReference>
<dbReference type="ComplexPortal" id="CPX-7085">
    <property type="entry name" value="bZIP transcription factor complex, BATF2-MAFF"/>
</dbReference>
<dbReference type="DIP" id="DIP-48662N"/>
<dbReference type="FunCoup" id="Q8N1L9">
    <property type="interactions" value="569"/>
</dbReference>
<dbReference type="IntAct" id="Q8N1L9">
    <property type="interactions" value="29"/>
</dbReference>
<dbReference type="STRING" id="9606.ENSP00000301887"/>
<dbReference type="GlyGen" id="Q8N1L9">
    <property type="glycosylation" value="1 site, 1 O-linked glycan (1 site)"/>
</dbReference>
<dbReference type="iPTMnet" id="Q8N1L9"/>
<dbReference type="PhosphoSitePlus" id="Q8N1L9"/>
<dbReference type="BioMuta" id="BATF2"/>
<dbReference type="DMDM" id="74750901"/>
<dbReference type="MassIVE" id="Q8N1L9"/>
<dbReference type="PaxDb" id="9606-ENSP00000301887"/>
<dbReference type="PeptideAtlas" id="Q8N1L9"/>
<dbReference type="Antibodypedia" id="29580">
    <property type="antibodies" value="194 antibodies from 28 providers"/>
</dbReference>
<dbReference type="DNASU" id="116071"/>
<dbReference type="Ensembl" id="ENST00000301887.9">
    <molecule id="Q8N1L9-1"/>
    <property type="protein sequence ID" value="ENSP00000301887.4"/>
    <property type="gene ID" value="ENSG00000168062.10"/>
</dbReference>
<dbReference type="Ensembl" id="ENST00000435842.2">
    <molecule id="Q8N1L9-2"/>
    <property type="protein sequence ID" value="ENSP00000398911.2"/>
    <property type="gene ID" value="ENSG00000168062.10"/>
</dbReference>
<dbReference type="GeneID" id="116071"/>
<dbReference type="KEGG" id="hsa:116071"/>
<dbReference type="MANE-Select" id="ENST00000301887.9">
    <property type="protein sequence ID" value="ENSP00000301887.4"/>
    <property type="RefSeq nucleotide sequence ID" value="NM_138456.4"/>
    <property type="RefSeq protein sequence ID" value="NP_612465.3"/>
</dbReference>
<dbReference type="UCSC" id="uc001oce.1">
    <molecule id="Q8N1L9-1"/>
    <property type="organism name" value="human"/>
</dbReference>
<dbReference type="AGR" id="HGNC:25163"/>
<dbReference type="CTD" id="116071"/>
<dbReference type="DisGeNET" id="116071"/>
<dbReference type="GeneCards" id="BATF2"/>
<dbReference type="HGNC" id="HGNC:25163">
    <property type="gene designation" value="BATF2"/>
</dbReference>
<dbReference type="HPA" id="ENSG00000168062">
    <property type="expression patterns" value="Low tissue specificity"/>
</dbReference>
<dbReference type="MIM" id="614983">
    <property type="type" value="gene"/>
</dbReference>
<dbReference type="neXtProt" id="NX_Q8N1L9"/>
<dbReference type="OpenTargets" id="ENSG00000168062"/>
<dbReference type="PharmGKB" id="PA143485315"/>
<dbReference type="VEuPathDB" id="HostDB:ENSG00000168062"/>
<dbReference type="eggNOG" id="KOG1414">
    <property type="taxonomic scope" value="Eukaryota"/>
</dbReference>
<dbReference type="GeneTree" id="ENSGT00940000162373"/>
<dbReference type="HOGENOM" id="CLU_088611_0_0_1"/>
<dbReference type="InParanoid" id="Q8N1L9"/>
<dbReference type="OMA" id="HGCQEQP"/>
<dbReference type="OrthoDB" id="295274at2759"/>
<dbReference type="PAN-GO" id="Q8N1L9">
    <property type="GO annotations" value="4 GO annotations based on evolutionary models"/>
</dbReference>
<dbReference type="PhylomeDB" id="Q8N1L9"/>
<dbReference type="TreeFam" id="TF332340"/>
<dbReference type="PathwayCommons" id="Q8N1L9"/>
<dbReference type="SignaLink" id="Q8N1L9"/>
<dbReference type="BioGRID-ORCS" id="116071">
    <property type="hits" value="12 hits in 1179 CRISPR screens"/>
</dbReference>
<dbReference type="ChiTaRS" id="BATF2">
    <property type="organism name" value="human"/>
</dbReference>
<dbReference type="GenomeRNAi" id="116071"/>
<dbReference type="Pharos" id="Q8N1L9">
    <property type="development level" value="Tbio"/>
</dbReference>
<dbReference type="PRO" id="PR:Q8N1L9"/>
<dbReference type="Proteomes" id="UP000005640">
    <property type="component" value="Chromosome 11"/>
</dbReference>
<dbReference type="RNAct" id="Q8N1L9">
    <property type="molecule type" value="protein"/>
</dbReference>
<dbReference type="Bgee" id="ENSG00000168062">
    <property type="expression patterns" value="Expressed in pancreatic ductal cell and 125 other cell types or tissues"/>
</dbReference>
<dbReference type="ExpressionAtlas" id="Q8N1L9">
    <property type="expression patterns" value="baseline and differential"/>
</dbReference>
<dbReference type="GO" id="GO:0000785">
    <property type="term" value="C:chromatin"/>
    <property type="evidence" value="ECO:0000247"/>
    <property type="project" value="NTNU_SB"/>
</dbReference>
<dbReference type="GO" id="GO:0005634">
    <property type="term" value="C:nucleus"/>
    <property type="evidence" value="ECO:0000318"/>
    <property type="project" value="GO_Central"/>
</dbReference>
<dbReference type="GO" id="GO:0090575">
    <property type="term" value="C:RNA polymerase II transcription regulator complex"/>
    <property type="evidence" value="ECO:0000353"/>
    <property type="project" value="ComplexPortal"/>
</dbReference>
<dbReference type="GO" id="GO:0000981">
    <property type="term" value="F:DNA-binding transcription factor activity, RNA polymerase II-specific"/>
    <property type="evidence" value="ECO:0000247"/>
    <property type="project" value="NTNU_SB"/>
</dbReference>
<dbReference type="GO" id="GO:0000978">
    <property type="term" value="F:RNA polymerase II cis-regulatory region sequence-specific DNA binding"/>
    <property type="evidence" value="ECO:0000318"/>
    <property type="project" value="GO_Central"/>
</dbReference>
<dbReference type="GO" id="GO:0042832">
    <property type="term" value="P:defense response to protozoan"/>
    <property type="evidence" value="ECO:0000250"/>
    <property type="project" value="UniProtKB"/>
</dbReference>
<dbReference type="GO" id="GO:0140467">
    <property type="term" value="P:integrated stress response signaling"/>
    <property type="evidence" value="ECO:0000303"/>
    <property type="project" value="ComplexPortal"/>
</dbReference>
<dbReference type="GO" id="GO:0043011">
    <property type="term" value="P:myeloid dendritic cell differentiation"/>
    <property type="evidence" value="ECO:0000250"/>
    <property type="project" value="UniProtKB"/>
</dbReference>
<dbReference type="GO" id="GO:0006357">
    <property type="term" value="P:regulation of transcription by RNA polymerase II"/>
    <property type="evidence" value="ECO:0000318"/>
    <property type="project" value="GO_Central"/>
</dbReference>
<dbReference type="CDD" id="cd14701">
    <property type="entry name" value="bZIP_BATF"/>
    <property type="match status" value="1"/>
</dbReference>
<dbReference type="FunFam" id="1.20.5.170:FF:000080">
    <property type="entry name" value="Basic leucine zipper transcriptional factor ATF-like 2"/>
    <property type="match status" value="1"/>
</dbReference>
<dbReference type="Gene3D" id="1.20.5.170">
    <property type="match status" value="1"/>
</dbReference>
<dbReference type="InterPro" id="IPR000837">
    <property type="entry name" value="AP-1"/>
</dbReference>
<dbReference type="InterPro" id="IPR004827">
    <property type="entry name" value="bZIP"/>
</dbReference>
<dbReference type="InterPro" id="IPR046347">
    <property type="entry name" value="bZIP_sf"/>
</dbReference>
<dbReference type="PANTHER" id="PTHR23351:SF11">
    <property type="entry name" value="BASIC LEUCINE ZIPPER TRANSCRIPTIONAL FACTOR ATF-LIKE 2"/>
    <property type="match status" value="1"/>
</dbReference>
<dbReference type="PANTHER" id="PTHR23351">
    <property type="entry name" value="FOS TRANSCRIPTION FACTOR-RELATED"/>
    <property type="match status" value="1"/>
</dbReference>
<dbReference type="Pfam" id="PF00170">
    <property type="entry name" value="bZIP_1"/>
    <property type="match status" value="1"/>
</dbReference>
<dbReference type="SMART" id="SM00338">
    <property type="entry name" value="BRLZ"/>
    <property type="match status" value="1"/>
</dbReference>
<dbReference type="SUPFAM" id="SSF57959">
    <property type="entry name" value="Leucine zipper domain"/>
    <property type="match status" value="1"/>
</dbReference>
<dbReference type="PROSITE" id="PS50217">
    <property type="entry name" value="BZIP"/>
    <property type="match status" value="1"/>
</dbReference>
<dbReference type="PROSITE" id="PS00036">
    <property type="entry name" value="BZIP_BASIC"/>
    <property type="match status" value="1"/>
</dbReference>